<gene>
    <name type="primary">S100A14</name>
</gene>
<keyword id="KW-0053">Apoptosis</keyword>
<keyword id="KW-0963">Cytoplasm</keyword>
<keyword id="KW-1185">Reference proteome</keyword>
<dbReference type="EMBL" id="BC105161">
    <property type="protein sequence ID" value="AAI05162.1"/>
    <property type="molecule type" value="mRNA"/>
</dbReference>
<dbReference type="RefSeq" id="NP_001073102.1">
    <property type="nucleotide sequence ID" value="NM_001079634.2"/>
</dbReference>
<dbReference type="RefSeq" id="XP_005203819.1">
    <property type="nucleotide sequence ID" value="XM_005203762.2"/>
</dbReference>
<dbReference type="SMR" id="Q3MHP3"/>
<dbReference type="FunCoup" id="Q3MHP3">
    <property type="interactions" value="73"/>
</dbReference>
<dbReference type="STRING" id="9913.ENSBTAP00000028498"/>
<dbReference type="PaxDb" id="9913-ENSBTAP00000028498"/>
<dbReference type="PeptideAtlas" id="Q3MHP3"/>
<dbReference type="Ensembl" id="ENSBTAT00000028498.4">
    <property type="protein sequence ID" value="ENSBTAP00000028498.3"/>
    <property type="gene ID" value="ENSBTAG00000021377.4"/>
</dbReference>
<dbReference type="GeneID" id="618250"/>
<dbReference type="KEGG" id="bta:618250"/>
<dbReference type="CTD" id="57402"/>
<dbReference type="VEuPathDB" id="HostDB:ENSBTAG00000021377"/>
<dbReference type="VGNC" id="VGNC:34240">
    <property type="gene designation" value="S100A14"/>
</dbReference>
<dbReference type="eggNOG" id="ENOG502SB9V">
    <property type="taxonomic scope" value="Eukaryota"/>
</dbReference>
<dbReference type="GeneTree" id="ENSGT00940000161706"/>
<dbReference type="HOGENOM" id="CLU_138624_3_0_1"/>
<dbReference type="InParanoid" id="Q3MHP3"/>
<dbReference type="OMA" id="NFHQYSA"/>
<dbReference type="OrthoDB" id="9402565at2759"/>
<dbReference type="TreeFam" id="TF332727"/>
<dbReference type="Proteomes" id="UP000009136">
    <property type="component" value="Chromosome 3"/>
</dbReference>
<dbReference type="Bgee" id="ENSBTAG00000021377">
    <property type="expression patterns" value="Expressed in surface of tongue and 103 other cell types or tissues"/>
</dbReference>
<dbReference type="GO" id="GO:0005615">
    <property type="term" value="C:extracellular space"/>
    <property type="evidence" value="ECO:0000318"/>
    <property type="project" value="GO_Central"/>
</dbReference>
<dbReference type="GO" id="GO:0048471">
    <property type="term" value="C:perinuclear region of cytoplasm"/>
    <property type="evidence" value="ECO:0000318"/>
    <property type="project" value="GO_Central"/>
</dbReference>
<dbReference type="GO" id="GO:0005509">
    <property type="term" value="F:calcium ion binding"/>
    <property type="evidence" value="ECO:0000318"/>
    <property type="project" value="GO_Central"/>
</dbReference>
<dbReference type="GO" id="GO:0048306">
    <property type="term" value="F:calcium-dependent protein binding"/>
    <property type="evidence" value="ECO:0000318"/>
    <property type="project" value="GO_Central"/>
</dbReference>
<dbReference type="GO" id="GO:0042379">
    <property type="term" value="F:chemokine receptor binding"/>
    <property type="evidence" value="ECO:0000318"/>
    <property type="project" value="GO_Central"/>
</dbReference>
<dbReference type="GO" id="GO:0006915">
    <property type="term" value="P:apoptotic process"/>
    <property type="evidence" value="ECO:0007669"/>
    <property type="project" value="UniProtKB-KW"/>
</dbReference>
<dbReference type="GO" id="GO:0042742">
    <property type="term" value="P:defense response to bacterium"/>
    <property type="evidence" value="ECO:0007669"/>
    <property type="project" value="Ensembl"/>
</dbReference>
<dbReference type="GO" id="GO:0071624">
    <property type="term" value="P:positive regulation of granulocyte chemotaxis"/>
    <property type="evidence" value="ECO:0000318"/>
    <property type="project" value="GO_Central"/>
</dbReference>
<dbReference type="GO" id="GO:0090026">
    <property type="term" value="P:positive regulation of monocyte chemotaxis"/>
    <property type="evidence" value="ECO:0000318"/>
    <property type="project" value="GO_Central"/>
</dbReference>
<dbReference type="GO" id="GO:0032496">
    <property type="term" value="P:response to lipopolysaccharide"/>
    <property type="evidence" value="ECO:0000318"/>
    <property type="project" value="GO_Central"/>
</dbReference>
<dbReference type="GO" id="GO:0034142">
    <property type="term" value="P:toll-like receptor 4 signaling pathway"/>
    <property type="evidence" value="ECO:0000318"/>
    <property type="project" value="GO_Central"/>
</dbReference>
<dbReference type="CDD" id="cd05022">
    <property type="entry name" value="S-100A13"/>
    <property type="match status" value="1"/>
</dbReference>
<dbReference type="FunFam" id="1.10.238.10:FF:000221">
    <property type="entry name" value="Protein S100-A14 isoform X1"/>
    <property type="match status" value="1"/>
</dbReference>
<dbReference type="Gene3D" id="1.10.238.10">
    <property type="entry name" value="EF-hand"/>
    <property type="match status" value="1"/>
</dbReference>
<dbReference type="InterPro" id="IPR011992">
    <property type="entry name" value="EF-hand-dom_pair"/>
</dbReference>
<dbReference type="InterPro" id="IPR013787">
    <property type="entry name" value="S100_Ca-bd_sub"/>
</dbReference>
<dbReference type="PANTHER" id="PTHR11639:SF4">
    <property type="entry name" value="PROTEIN S100-A14"/>
    <property type="match status" value="1"/>
</dbReference>
<dbReference type="PANTHER" id="PTHR11639">
    <property type="entry name" value="S100 CALCIUM-BINDING PROTEIN"/>
    <property type="match status" value="1"/>
</dbReference>
<dbReference type="Pfam" id="PF01023">
    <property type="entry name" value="S_100"/>
    <property type="match status" value="1"/>
</dbReference>
<dbReference type="SMART" id="SM01394">
    <property type="entry name" value="S_100"/>
    <property type="match status" value="1"/>
</dbReference>
<dbReference type="SUPFAM" id="SSF47473">
    <property type="entry name" value="EF-hand"/>
    <property type="match status" value="1"/>
</dbReference>
<name>S10AE_BOVIN</name>
<organism>
    <name type="scientific">Bos taurus</name>
    <name type="common">Bovine</name>
    <dbReference type="NCBI Taxonomy" id="9913"/>
    <lineage>
        <taxon>Eukaryota</taxon>
        <taxon>Metazoa</taxon>
        <taxon>Chordata</taxon>
        <taxon>Craniata</taxon>
        <taxon>Vertebrata</taxon>
        <taxon>Euteleostomi</taxon>
        <taxon>Mammalia</taxon>
        <taxon>Eutheria</taxon>
        <taxon>Laurasiatheria</taxon>
        <taxon>Artiodactyla</taxon>
        <taxon>Ruminantia</taxon>
        <taxon>Pecora</taxon>
        <taxon>Bovidae</taxon>
        <taxon>Bovinae</taxon>
        <taxon>Bos</taxon>
    </lineage>
</organism>
<protein>
    <recommendedName>
        <fullName>Protein S100-A14</fullName>
    </recommendedName>
    <alternativeName>
        <fullName>S100 calcium-binding protein A14</fullName>
    </alternativeName>
</protein>
<comment type="function">
    <text evidence="1">Modulates P53/TP53 protein levels, and thereby plays a role in the regulation of cell survival and apoptosis. Depending on the context, it can promote cell proliferation or apoptosis. Plays a role in the regulation of cell migration by modulating the levels of MMP2, a matrix protease that is under transcriptional control of P53/TP53. Does not bind calcium (By similarity).</text>
</comment>
<comment type="subunit">
    <text evidence="1">Homodimer. Interacts with AGER (By similarity).</text>
</comment>
<comment type="subcellular location">
    <subcellularLocation>
        <location evidence="1">Cytoplasm</location>
    </subcellularLocation>
</comment>
<comment type="similarity">
    <text evidence="2">Belongs to the S-100 family.</text>
</comment>
<sequence length="104" mass="11410">MGQCRSANAEDAQELSDVERAIETLIKNFHQYSVEGGKETLTPSELRDLVTQQLPHLMPSNCGLEEKIANLGNCNDSKLEFGSFWELIGEAAKSVKLENAVQGS</sequence>
<feature type="chain" id="PRO_0000236023" description="Protein S100-A14">
    <location>
        <begin position="1"/>
        <end position="104"/>
    </location>
</feature>
<feature type="domain" description="EF-hand">
    <location>
        <begin position="27"/>
        <end position="61"/>
    </location>
</feature>
<accession>Q3MHP3</accession>
<reference key="1">
    <citation type="submission" date="2005-09" db="EMBL/GenBank/DDBJ databases">
        <authorList>
            <consortium name="NIH - Mammalian Gene Collection (MGC) project"/>
        </authorList>
    </citation>
    <scope>NUCLEOTIDE SEQUENCE [LARGE SCALE MRNA]</scope>
    <source>
        <strain>Crossbred X Angus</strain>
        <tissue>Ileum</tissue>
    </source>
</reference>
<evidence type="ECO:0000250" key="1"/>
<evidence type="ECO:0000305" key="2"/>
<proteinExistence type="inferred from homology"/>